<evidence type="ECO:0000250" key="1"/>
<evidence type="ECO:0000250" key="2">
    <source>
        <dbReference type="UniProtKB" id="Q9ZSD4"/>
    </source>
</evidence>
<evidence type="ECO:0000255" key="3"/>
<evidence type="ECO:0000255" key="4">
    <source>
        <dbReference type="PROSITE-ProRule" id="PRU00202"/>
    </source>
</evidence>
<evidence type="ECO:0000269" key="5">
    <source>
    </source>
</evidence>
<evidence type="ECO:0000269" key="6">
    <source>
    </source>
</evidence>
<evidence type="ECO:0000303" key="7">
    <source>
    </source>
</evidence>
<evidence type="ECO:0000305" key="8"/>
<evidence type="ECO:0000305" key="9">
    <source>
    </source>
</evidence>
<evidence type="ECO:0000312" key="10">
    <source>
        <dbReference type="Araport" id="AT4G03330"/>
    </source>
</evidence>
<evidence type="ECO:0000312" key="11">
    <source>
        <dbReference type="EMBL" id="AAD14461.1"/>
    </source>
</evidence>
<gene>
    <name evidence="7" type="primary">SYP123</name>
    <name evidence="10" type="ordered locus">At4g03330</name>
    <name evidence="11" type="ORF">F4C21.26</name>
</gene>
<dbReference type="EMBL" id="GU571158">
    <property type="protein sequence ID" value="ADM21178.1"/>
    <property type="molecule type" value="Genomic_DNA"/>
</dbReference>
<dbReference type="EMBL" id="AC005275">
    <property type="protein sequence ID" value="AAD14461.1"/>
    <property type="molecule type" value="Genomic_DNA"/>
</dbReference>
<dbReference type="EMBL" id="AL161496">
    <property type="protein sequence ID" value="CAB77818.1"/>
    <property type="molecule type" value="Genomic_DNA"/>
</dbReference>
<dbReference type="EMBL" id="CP002687">
    <property type="protein sequence ID" value="AEE82307.1"/>
    <property type="molecule type" value="Genomic_DNA"/>
</dbReference>
<dbReference type="EMBL" id="AK229042">
    <property type="protein sequence ID" value="BAF00925.1"/>
    <property type="molecule type" value="mRNA"/>
</dbReference>
<dbReference type="EMBL" id="BT044612">
    <property type="protein sequence ID" value="ACI31312.1"/>
    <property type="molecule type" value="mRNA"/>
</dbReference>
<dbReference type="EMBL" id="AY087693">
    <property type="protein sequence ID" value="AAM65230.1"/>
    <property type="molecule type" value="mRNA"/>
</dbReference>
<dbReference type="PIR" id="C85042">
    <property type="entry name" value="C85042"/>
</dbReference>
<dbReference type="RefSeq" id="NP_192242.1">
    <property type="nucleotide sequence ID" value="NM_116571.3"/>
</dbReference>
<dbReference type="SMR" id="Q9ZQZ8"/>
<dbReference type="BioGRID" id="13261">
    <property type="interactions" value="39"/>
</dbReference>
<dbReference type="FunCoup" id="Q9ZQZ8">
    <property type="interactions" value="586"/>
</dbReference>
<dbReference type="IntAct" id="Q9ZQZ8">
    <property type="interactions" value="38"/>
</dbReference>
<dbReference type="STRING" id="3702.Q9ZQZ8"/>
<dbReference type="PaxDb" id="3702-AT4G03330.1"/>
<dbReference type="ProteomicsDB" id="226773"/>
<dbReference type="EnsemblPlants" id="AT4G03330.1">
    <property type="protein sequence ID" value="AT4G03330.1"/>
    <property type="gene ID" value="AT4G03330"/>
</dbReference>
<dbReference type="GeneID" id="827970"/>
<dbReference type="Gramene" id="AT4G03330.1">
    <property type="protein sequence ID" value="AT4G03330.1"/>
    <property type="gene ID" value="AT4G03330"/>
</dbReference>
<dbReference type="KEGG" id="ath:AT4G03330"/>
<dbReference type="Araport" id="AT4G03330"/>
<dbReference type="TAIR" id="AT4G03330">
    <property type="gene designation" value="SYP123"/>
</dbReference>
<dbReference type="eggNOG" id="KOG0810">
    <property type="taxonomic scope" value="Eukaryota"/>
</dbReference>
<dbReference type="HOGENOM" id="CLU_042423_1_1_1"/>
<dbReference type="InParanoid" id="Q9ZQZ8"/>
<dbReference type="OMA" id="AQGNMLN"/>
<dbReference type="OrthoDB" id="10255013at2759"/>
<dbReference type="PhylomeDB" id="Q9ZQZ8"/>
<dbReference type="PRO" id="PR:Q9ZQZ8"/>
<dbReference type="Proteomes" id="UP000006548">
    <property type="component" value="Chromosome 4"/>
</dbReference>
<dbReference type="ExpressionAtlas" id="Q9ZQZ8">
    <property type="expression patterns" value="baseline and differential"/>
</dbReference>
<dbReference type="GO" id="GO:0016020">
    <property type="term" value="C:membrane"/>
    <property type="evidence" value="ECO:0007669"/>
    <property type="project" value="UniProtKB-SubCell"/>
</dbReference>
<dbReference type="GO" id="GO:0005484">
    <property type="term" value="F:SNAP receptor activity"/>
    <property type="evidence" value="ECO:0007669"/>
    <property type="project" value="InterPro"/>
</dbReference>
<dbReference type="GO" id="GO:0006886">
    <property type="term" value="P:intracellular protein transport"/>
    <property type="evidence" value="ECO:0007669"/>
    <property type="project" value="InterPro"/>
</dbReference>
<dbReference type="GO" id="GO:0016192">
    <property type="term" value="P:vesicle-mediated transport"/>
    <property type="evidence" value="ECO:0007669"/>
    <property type="project" value="InterPro"/>
</dbReference>
<dbReference type="CDD" id="cd15848">
    <property type="entry name" value="SNARE_syntaxin1-like"/>
    <property type="match status" value="1"/>
</dbReference>
<dbReference type="CDD" id="cd00179">
    <property type="entry name" value="SynN"/>
    <property type="match status" value="1"/>
</dbReference>
<dbReference type="FunFam" id="1.20.58.70:FF:000003">
    <property type="entry name" value="Qa-SNARE, Sso1/Syntaxin1-type, SYP12A-group"/>
    <property type="match status" value="1"/>
</dbReference>
<dbReference type="FunFam" id="1.20.5.110:FF:000008">
    <property type="entry name" value="Syntaxin 132"/>
    <property type="match status" value="1"/>
</dbReference>
<dbReference type="Gene3D" id="1.20.5.110">
    <property type="match status" value="1"/>
</dbReference>
<dbReference type="Gene3D" id="1.20.58.70">
    <property type="match status" value="1"/>
</dbReference>
<dbReference type="InterPro" id="IPR010989">
    <property type="entry name" value="SNARE"/>
</dbReference>
<dbReference type="InterPro" id="IPR045242">
    <property type="entry name" value="Syntaxin"/>
</dbReference>
<dbReference type="InterPro" id="IPR006012">
    <property type="entry name" value="Syntaxin/epimorphin_CS"/>
</dbReference>
<dbReference type="InterPro" id="IPR006011">
    <property type="entry name" value="Syntaxin_N"/>
</dbReference>
<dbReference type="InterPro" id="IPR000727">
    <property type="entry name" value="T_SNARE_dom"/>
</dbReference>
<dbReference type="PANTHER" id="PTHR19957">
    <property type="entry name" value="SYNTAXIN"/>
    <property type="match status" value="1"/>
</dbReference>
<dbReference type="PANTHER" id="PTHR19957:SF395">
    <property type="entry name" value="SYNTAXIN-123"/>
    <property type="match status" value="1"/>
</dbReference>
<dbReference type="Pfam" id="PF05739">
    <property type="entry name" value="SNARE"/>
    <property type="match status" value="1"/>
</dbReference>
<dbReference type="Pfam" id="PF00804">
    <property type="entry name" value="Syntaxin"/>
    <property type="match status" value="1"/>
</dbReference>
<dbReference type="SMART" id="SM00503">
    <property type="entry name" value="SynN"/>
    <property type="match status" value="1"/>
</dbReference>
<dbReference type="SMART" id="SM00397">
    <property type="entry name" value="t_SNARE"/>
    <property type="match status" value="1"/>
</dbReference>
<dbReference type="SUPFAM" id="SSF47661">
    <property type="entry name" value="t-snare proteins"/>
    <property type="match status" value="1"/>
</dbReference>
<dbReference type="PROSITE" id="PS00914">
    <property type="entry name" value="SYNTAXIN"/>
    <property type="match status" value="1"/>
</dbReference>
<dbReference type="PROSITE" id="PS50192">
    <property type="entry name" value="T_SNARE"/>
    <property type="match status" value="1"/>
</dbReference>
<feature type="chain" id="PRO_0000210248" description="Syntaxin-123">
    <location>
        <begin position="1"/>
        <end position="305"/>
    </location>
</feature>
<feature type="topological domain" description="Cytoplasmic" evidence="3">
    <location>
        <begin position="1"/>
        <end position="278"/>
    </location>
</feature>
<feature type="transmembrane region" description="Helical; Anchor for type IV membrane protein" evidence="3">
    <location>
        <begin position="279"/>
        <end position="299"/>
    </location>
</feature>
<feature type="topological domain" description="Vesicular" evidence="3">
    <location>
        <begin position="300"/>
        <end position="305"/>
    </location>
</feature>
<feature type="domain" description="t-SNARE coiled-coil homology" evidence="4">
    <location>
        <begin position="206"/>
        <end position="268"/>
    </location>
</feature>
<feature type="coiled-coil region" evidence="3">
    <location>
        <begin position="46"/>
        <end position="66"/>
    </location>
</feature>
<feature type="modified residue" description="N-acetylmethionine" evidence="2">
    <location>
        <position position="1"/>
    </location>
</feature>
<sequence length="305" mass="34483">MNDLISSSFKRYTDLNHQVQLDDIESQNVSLDSGNLDEFFGYVESVKEDMKAVDEIHKRLQDANEESKTVHDSKAVKKLRARMDSSVTEVLKRVKMIKTKLVALEKSNAAQRKVAGCGPGSSADRTRTSVVSGLGKKLKDMMDDFQRLRTKMATEYKETVERRYFTVTGQKADEETVEKLISSGESERFLQKAIQEQGRGQVMDTLSEIQERHDTVKEIERSLLELHQVFLDMAALVEAQGNMLNDIESNVSKASSFVMRGTDQLHGAKVLQRNNRKWACIATILAIVVVIVILFPILFNTLLRP</sequence>
<reference key="1">
    <citation type="journal article" date="2010" name="Nat. Genet.">
        <title>Natural variation at strubbelig receptor kinase 3 drives immune-triggered incompatibilities between Arabidopsis thaliana accessions.</title>
        <authorList>
            <person name="Alcazar R."/>
            <person name="Garcia A.V."/>
            <person name="Kronholm I."/>
            <person name="de Meaux J."/>
            <person name="Koornneef M."/>
            <person name="Parker J.E."/>
            <person name="Reymond M."/>
        </authorList>
    </citation>
    <scope>NUCLEOTIDE SEQUENCE [GENOMIC DNA]</scope>
</reference>
<reference key="2">
    <citation type="journal article" date="1999" name="Nature">
        <title>Sequence and analysis of chromosome 4 of the plant Arabidopsis thaliana.</title>
        <authorList>
            <person name="Mayer K.F.X."/>
            <person name="Schueller C."/>
            <person name="Wambutt R."/>
            <person name="Murphy G."/>
            <person name="Volckaert G."/>
            <person name="Pohl T."/>
            <person name="Duesterhoeft A."/>
            <person name="Stiekema W."/>
            <person name="Entian K.-D."/>
            <person name="Terryn N."/>
            <person name="Harris B."/>
            <person name="Ansorge W."/>
            <person name="Brandt P."/>
            <person name="Grivell L.A."/>
            <person name="Rieger M."/>
            <person name="Weichselgartner M."/>
            <person name="de Simone V."/>
            <person name="Obermaier B."/>
            <person name="Mache R."/>
            <person name="Mueller M."/>
            <person name="Kreis M."/>
            <person name="Delseny M."/>
            <person name="Puigdomenech P."/>
            <person name="Watson M."/>
            <person name="Schmidtheini T."/>
            <person name="Reichert B."/>
            <person name="Portetelle D."/>
            <person name="Perez-Alonso M."/>
            <person name="Boutry M."/>
            <person name="Bancroft I."/>
            <person name="Vos P."/>
            <person name="Hoheisel J."/>
            <person name="Zimmermann W."/>
            <person name="Wedler H."/>
            <person name="Ridley P."/>
            <person name="Langham S.-A."/>
            <person name="McCullagh B."/>
            <person name="Bilham L."/>
            <person name="Robben J."/>
            <person name="van der Schueren J."/>
            <person name="Grymonprez B."/>
            <person name="Chuang Y.-J."/>
            <person name="Vandenbussche F."/>
            <person name="Braeken M."/>
            <person name="Weltjens I."/>
            <person name="Voet M."/>
            <person name="Bastiaens I."/>
            <person name="Aert R."/>
            <person name="Defoor E."/>
            <person name="Weitzenegger T."/>
            <person name="Bothe G."/>
            <person name="Ramsperger U."/>
            <person name="Hilbert H."/>
            <person name="Braun M."/>
            <person name="Holzer E."/>
            <person name="Brandt A."/>
            <person name="Peters S."/>
            <person name="van Staveren M."/>
            <person name="Dirkse W."/>
            <person name="Mooijman P."/>
            <person name="Klein Lankhorst R."/>
            <person name="Rose M."/>
            <person name="Hauf J."/>
            <person name="Koetter P."/>
            <person name="Berneiser S."/>
            <person name="Hempel S."/>
            <person name="Feldpausch M."/>
            <person name="Lamberth S."/>
            <person name="Van den Daele H."/>
            <person name="De Keyser A."/>
            <person name="Buysshaert C."/>
            <person name="Gielen J."/>
            <person name="Villarroel R."/>
            <person name="De Clercq R."/>
            <person name="van Montagu M."/>
            <person name="Rogers J."/>
            <person name="Cronin A."/>
            <person name="Quail M.A."/>
            <person name="Bray-Allen S."/>
            <person name="Clark L."/>
            <person name="Doggett J."/>
            <person name="Hall S."/>
            <person name="Kay M."/>
            <person name="Lennard N."/>
            <person name="McLay K."/>
            <person name="Mayes R."/>
            <person name="Pettett A."/>
            <person name="Rajandream M.A."/>
            <person name="Lyne M."/>
            <person name="Benes V."/>
            <person name="Rechmann S."/>
            <person name="Borkova D."/>
            <person name="Bloecker H."/>
            <person name="Scharfe M."/>
            <person name="Grimm M."/>
            <person name="Loehnert T.-H."/>
            <person name="Dose S."/>
            <person name="de Haan M."/>
            <person name="Maarse A.C."/>
            <person name="Schaefer M."/>
            <person name="Mueller-Auer S."/>
            <person name="Gabel C."/>
            <person name="Fuchs M."/>
            <person name="Fartmann B."/>
            <person name="Granderath K."/>
            <person name="Dauner D."/>
            <person name="Herzl A."/>
            <person name="Neumann S."/>
            <person name="Argiriou A."/>
            <person name="Vitale D."/>
            <person name="Liguori R."/>
            <person name="Piravandi E."/>
            <person name="Massenet O."/>
            <person name="Quigley F."/>
            <person name="Clabauld G."/>
            <person name="Muendlein A."/>
            <person name="Felber R."/>
            <person name="Schnabl S."/>
            <person name="Hiller R."/>
            <person name="Schmidt W."/>
            <person name="Lecharny A."/>
            <person name="Aubourg S."/>
            <person name="Chefdor F."/>
            <person name="Cooke R."/>
            <person name="Berger C."/>
            <person name="Monfort A."/>
            <person name="Casacuberta E."/>
            <person name="Gibbons T."/>
            <person name="Weber N."/>
            <person name="Vandenbol M."/>
            <person name="Bargues M."/>
            <person name="Terol J."/>
            <person name="Torres A."/>
            <person name="Perez-Perez A."/>
            <person name="Purnelle B."/>
            <person name="Bent E."/>
            <person name="Johnson S."/>
            <person name="Tacon D."/>
            <person name="Jesse T."/>
            <person name="Heijnen L."/>
            <person name="Schwarz S."/>
            <person name="Scholler P."/>
            <person name="Heber S."/>
            <person name="Francs P."/>
            <person name="Bielke C."/>
            <person name="Frishman D."/>
            <person name="Haase D."/>
            <person name="Lemcke K."/>
            <person name="Mewes H.-W."/>
            <person name="Stocker S."/>
            <person name="Zaccaria P."/>
            <person name="Bevan M."/>
            <person name="Wilson R.K."/>
            <person name="de la Bastide M."/>
            <person name="Habermann K."/>
            <person name="Parnell L."/>
            <person name="Dedhia N."/>
            <person name="Gnoj L."/>
            <person name="Schutz K."/>
            <person name="Huang E."/>
            <person name="Spiegel L."/>
            <person name="Sekhon M."/>
            <person name="Murray J."/>
            <person name="Sheet P."/>
            <person name="Cordes M."/>
            <person name="Abu-Threideh J."/>
            <person name="Stoneking T."/>
            <person name="Kalicki J."/>
            <person name="Graves T."/>
            <person name="Harmon G."/>
            <person name="Edwards J."/>
            <person name="Latreille P."/>
            <person name="Courtney L."/>
            <person name="Cloud J."/>
            <person name="Abbott A."/>
            <person name="Scott K."/>
            <person name="Johnson D."/>
            <person name="Minx P."/>
            <person name="Bentley D."/>
            <person name="Fulton B."/>
            <person name="Miller N."/>
            <person name="Greco T."/>
            <person name="Kemp K."/>
            <person name="Kramer J."/>
            <person name="Fulton L."/>
            <person name="Mardis E."/>
            <person name="Dante M."/>
            <person name="Pepin K."/>
            <person name="Hillier L.W."/>
            <person name="Nelson J."/>
            <person name="Spieth J."/>
            <person name="Ryan E."/>
            <person name="Andrews S."/>
            <person name="Geisel C."/>
            <person name="Layman D."/>
            <person name="Du H."/>
            <person name="Ali J."/>
            <person name="Berghoff A."/>
            <person name="Jones K."/>
            <person name="Drone K."/>
            <person name="Cotton M."/>
            <person name="Joshu C."/>
            <person name="Antonoiu B."/>
            <person name="Zidanic M."/>
            <person name="Strong C."/>
            <person name="Sun H."/>
            <person name="Lamar B."/>
            <person name="Yordan C."/>
            <person name="Ma P."/>
            <person name="Zhong J."/>
            <person name="Preston R."/>
            <person name="Vil D."/>
            <person name="Shekher M."/>
            <person name="Matero A."/>
            <person name="Shah R."/>
            <person name="Swaby I.K."/>
            <person name="O'Shaughnessy A."/>
            <person name="Rodriguez M."/>
            <person name="Hoffman J."/>
            <person name="Till S."/>
            <person name="Granat S."/>
            <person name="Shohdy N."/>
            <person name="Hasegawa A."/>
            <person name="Hameed A."/>
            <person name="Lodhi M."/>
            <person name="Johnson A."/>
            <person name="Chen E."/>
            <person name="Marra M.A."/>
            <person name="Martienssen R."/>
            <person name="McCombie W.R."/>
        </authorList>
    </citation>
    <scope>NUCLEOTIDE SEQUENCE [LARGE SCALE GENOMIC DNA]</scope>
    <source>
        <strain>cv. Columbia</strain>
    </source>
</reference>
<reference key="3">
    <citation type="journal article" date="2017" name="Plant J.">
        <title>Araport11: a complete reannotation of the Arabidopsis thaliana reference genome.</title>
        <authorList>
            <person name="Cheng C.Y."/>
            <person name="Krishnakumar V."/>
            <person name="Chan A.P."/>
            <person name="Thibaud-Nissen F."/>
            <person name="Schobel S."/>
            <person name="Town C.D."/>
        </authorList>
    </citation>
    <scope>GENOME REANNOTATION</scope>
    <source>
        <strain>cv. Columbia</strain>
    </source>
</reference>
<reference key="4">
    <citation type="submission" date="2006-07" db="EMBL/GenBank/DDBJ databases">
        <title>Large-scale analysis of RIKEN Arabidopsis full-length (RAFL) cDNAs.</title>
        <authorList>
            <person name="Totoki Y."/>
            <person name="Seki M."/>
            <person name="Ishida J."/>
            <person name="Nakajima M."/>
            <person name="Enju A."/>
            <person name="Kamiya A."/>
            <person name="Narusaka M."/>
            <person name="Shin-i T."/>
            <person name="Nakagawa M."/>
            <person name="Sakamoto N."/>
            <person name="Oishi K."/>
            <person name="Kohara Y."/>
            <person name="Kobayashi M."/>
            <person name="Toyoda A."/>
            <person name="Sakaki Y."/>
            <person name="Sakurai T."/>
            <person name="Iida K."/>
            <person name="Akiyama K."/>
            <person name="Satou M."/>
            <person name="Toyoda T."/>
            <person name="Konagaya A."/>
            <person name="Carninci P."/>
            <person name="Kawai J."/>
            <person name="Hayashizaki Y."/>
            <person name="Shinozaki K."/>
        </authorList>
    </citation>
    <scope>NUCLEOTIDE SEQUENCE [LARGE SCALE MRNA]</scope>
    <source>
        <strain>cv. Columbia</strain>
    </source>
</reference>
<reference key="5">
    <citation type="submission" date="2008-10" db="EMBL/GenBank/DDBJ databases">
        <title>Arabidopsis ORF clones.</title>
        <authorList>
            <person name="De Los Reyes C."/>
            <person name="Quan R."/>
            <person name="Chen H."/>
            <person name="Bautista V.R."/>
            <person name="Kim C.J."/>
            <person name="Ecker J.R."/>
        </authorList>
    </citation>
    <scope>NUCLEOTIDE SEQUENCE [LARGE SCALE MRNA]</scope>
    <source>
        <strain>cv. Columbia</strain>
    </source>
</reference>
<reference key="6">
    <citation type="submission" date="2002-03" db="EMBL/GenBank/DDBJ databases">
        <title>Full-length cDNA from Arabidopsis thaliana.</title>
        <authorList>
            <person name="Brover V.V."/>
            <person name="Troukhan M.E."/>
            <person name="Alexandrov N.A."/>
            <person name="Lu Y.-P."/>
            <person name="Flavell R.B."/>
            <person name="Feldmann K.A."/>
        </authorList>
    </citation>
    <scope>NUCLEOTIDE SEQUENCE [LARGE SCALE MRNA]</scope>
</reference>
<reference key="7">
    <citation type="journal article" date="2009" name="Plant Cell Physiol.">
        <title>Differential expression control and polarized distribution of plasma membrane-resident SYP1 SNAREs in Arabidopsis thaliana.</title>
        <authorList>
            <person name="Enami K."/>
            <person name="Ichikawa M."/>
            <person name="Uemura T."/>
            <person name="Kutsuna N."/>
            <person name="Hasezawa S."/>
            <person name="Nakagawa T."/>
            <person name="Nakano A."/>
            <person name="Sato M.H."/>
        </authorList>
    </citation>
    <scope>TISSUE SPECIFICITY</scope>
</reference>
<reference key="8">
    <citation type="journal article" date="2014" name="Plant Cell Physiol.">
        <title>Syntaxin of plant proteins SYP123 and SYP132 mediate root hair tip growth in Arabidopsis thaliana.</title>
        <authorList>
            <person name="Ichikawa M."/>
            <person name="Hirano T."/>
            <person name="Enami K."/>
            <person name="Fuselier T."/>
            <person name="Kato N."/>
            <person name="Kwon C."/>
            <person name="Voigt B."/>
            <person name="Schulze-Lefert P."/>
            <person name="Baluska F."/>
            <person name="Sato M.H."/>
        </authorList>
    </citation>
    <scope>FUNCTION</scope>
    <scope>DISRUPTION PHENOTYPE</scope>
</reference>
<keyword id="KW-0007">Acetylation</keyword>
<keyword id="KW-0175">Coiled coil</keyword>
<keyword id="KW-0472">Membrane</keyword>
<keyword id="KW-0653">Protein transport</keyword>
<keyword id="KW-1185">Reference proteome</keyword>
<keyword id="KW-0812">Transmembrane</keyword>
<keyword id="KW-1133">Transmembrane helix</keyword>
<keyword id="KW-0813">Transport</keyword>
<comment type="function">
    <text evidence="6 9">Vesicle trafficking protein that functions in the secretory pathway (Probable). Acts in coordination with SYP132 to mediate tip-focused membrane trafficking for root hair tip growth (PubMed:24642714). Functions in root hair elongation by forming SNARE complexes with VAMP721,VAMP722 or VAMP724 (PubMed:24642714).</text>
</comment>
<comment type="subunit">
    <text evidence="1">Part of the t-SNARE complex.</text>
</comment>
<comment type="subcellular location">
    <subcellularLocation>
        <location evidence="3">Membrane</location>
        <topology evidence="3">Single-pass type IV membrane protein</topology>
    </subcellularLocation>
</comment>
<comment type="tissue specificity">
    <text evidence="5">Expressed in tips of root hairs.</text>
</comment>
<comment type="disruption phenotype">
    <text evidence="6">Reduced root hair length.</text>
</comment>
<comment type="similarity">
    <text evidence="8">Belongs to the syntaxin family.</text>
</comment>
<accession>Q9ZQZ8</accession>
<accession>A0A178V4Y6</accession>
<accession>Q0WPM4</accession>
<protein>
    <recommendedName>
        <fullName evidence="8">Syntaxin-123</fullName>
        <shortName evidence="8">AtSYP123</shortName>
    </recommendedName>
</protein>
<proteinExistence type="evidence at transcript level"/>
<name>SY123_ARATH</name>
<organism>
    <name type="scientific">Arabidopsis thaliana</name>
    <name type="common">Mouse-ear cress</name>
    <dbReference type="NCBI Taxonomy" id="3702"/>
    <lineage>
        <taxon>Eukaryota</taxon>
        <taxon>Viridiplantae</taxon>
        <taxon>Streptophyta</taxon>
        <taxon>Embryophyta</taxon>
        <taxon>Tracheophyta</taxon>
        <taxon>Spermatophyta</taxon>
        <taxon>Magnoliopsida</taxon>
        <taxon>eudicotyledons</taxon>
        <taxon>Gunneridae</taxon>
        <taxon>Pentapetalae</taxon>
        <taxon>rosids</taxon>
        <taxon>malvids</taxon>
        <taxon>Brassicales</taxon>
        <taxon>Brassicaceae</taxon>
        <taxon>Camelineae</taxon>
        <taxon>Arabidopsis</taxon>
    </lineage>
</organism>